<comment type="function">
    <text evidence="2">Component of the cytochrome b6-f complex, which mediates electron transfer between photosystem II (PSII) and photosystem I (PSI), cyclic electron flow around PSI, and state transitions.</text>
</comment>
<comment type="subunit">
    <text evidence="1">The 4 large subunits of the cytochrome b6-f complex are cytochrome b6, subunit IV (17 kDa polypeptide, petD), cytochrome f and the Rieske protein, while the 4 small subunits are petG, petL, petM and petN. The complex functions as a dimer (By similarity).</text>
</comment>
<comment type="subcellular location">
    <subcellularLocation>
        <location evidence="2">Plastid</location>
        <location evidence="2">Chloroplast thylakoid membrane</location>
        <topology evidence="2">Multi-pass membrane protein</topology>
    </subcellularLocation>
</comment>
<comment type="similarity">
    <text evidence="2">Belongs to the cytochrome b family. PetD subfamily.</text>
</comment>
<accession>Q1HCL0</accession>
<proteinExistence type="inferred from homology"/>
<feature type="chain" id="PRO_0000255564" description="Cytochrome b6-f complex subunit 4">
    <location>
        <begin position="1"/>
        <end position="157"/>
    </location>
</feature>
<feature type="transmembrane region" description="Helical" evidence="2">
    <location>
        <begin position="35"/>
        <end position="55"/>
    </location>
</feature>
<feature type="transmembrane region" description="Helical" evidence="2">
    <location>
        <begin position="94"/>
        <end position="114"/>
    </location>
</feature>
<feature type="transmembrane region" description="Helical" evidence="2">
    <location>
        <begin position="130"/>
        <end position="150"/>
    </location>
</feature>
<gene>
    <name evidence="2" type="primary">petD</name>
</gene>
<reference key="1">
    <citation type="submission" date="2006-04" db="EMBL/GenBank/DDBJ databases">
        <title>Comparative analysis of dinoflagellate chloroplast genomes reveals rRNA and tRNA genes.</title>
        <authorList>
            <person name="Barbrook A.C."/>
            <person name="Hiller R.G."/>
            <person name="Howe C.J."/>
        </authorList>
    </citation>
    <scope>NUCLEOTIDE SEQUENCE [GENOMIC DNA]</scope>
    <source>
        <strain>CS21</strain>
    </source>
</reference>
<name>PETD_AMPCA</name>
<dbReference type="EMBL" id="DQ507217">
    <property type="protein sequence ID" value="ABF57013.1"/>
    <property type="molecule type" value="Genomic_DNA"/>
</dbReference>
<dbReference type="SMR" id="Q1HCL0"/>
<dbReference type="GO" id="GO:0009535">
    <property type="term" value="C:chloroplast thylakoid membrane"/>
    <property type="evidence" value="ECO:0007669"/>
    <property type="project" value="UniProtKB-SubCell"/>
</dbReference>
<dbReference type="GO" id="GO:0045158">
    <property type="term" value="F:electron transporter, transferring electrons within cytochrome b6/f complex of photosystem II activity"/>
    <property type="evidence" value="ECO:0007669"/>
    <property type="project" value="UniProtKB-UniRule"/>
</dbReference>
<dbReference type="GO" id="GO:0045156">
    <property type="term" value="F:electron transporter, transferring electrons within the cyclic electron transport pathway of photosynthesis activity"/>
    <property type="evidence" value="ECO:0007669"/>
    <property type="project" value="InterPro"/>
</dbReference>
<dbReference type="GO" id="GO:0016491">
    <property type="term" value="F:oxidoreductase activity"/>
    <property type="evidence" value="ECO:0007669"/>
    <property type="project" value="InterPro"/>
</dbReference>
<dbReference type="GO" id="GO:0009767">
    <property type="term" value="P:photosynthetic electron transport chain"/>
    <property type="evidence" value="ECO:0007669"/>
    <property type="project" value="InterPro"/>
</dbReference>
<dbReference type="CDD" id="cd00290">
    <property type="entry name" value="cytochrome_b_C"/>
    <property type="match status" value="1"/>
</dbReference>
<dbReference type="Gene3D" id="1.10.287.980">
    <property type="entry name" value="plastocyanin oxidoreductase"/>
    <property type="match status" value="1"/>
</dbReference>
<dbReference type="Gene3D" id="1.20.5.510">
    <property type="entry name" value="Single helix bin"/>
    <property type="match status" value="1"/>
</dbReference>
<dbReference type="HAMAP" id="MF_01344">
    <property type="entry name" value="Cytb6_f_subIV"/>
    <property type="match status" value="1"/>
</dbReference>
<dbReference type="InterPro" id="IPR005798">
    <property type="entry name" value="Cyt_b/b6_C"/>
</dbReference>
<dbReference type="InterPro" id="IPR036150">
    <property type="entry name" value="Cyt_b/b6_C_sf"/>
</dbReference>
<dbReference type="InterPro" id="IPR005870">
    <property type="entry name" value="Cyt_b6/f_cplx_suIV"/>
</dbReference>
<dbReference type="InterPro" id="IPR048260">
    <property type="entry name" value="Cytochrome_b_C_euk/bac"/>
</dbReference>
<dbReference type="NCBIfam" id="TIGR01156">
    <property type="entry name" value="cytb6_f_IV"/>
    <property type="match status" value="1"/>
</dbReference>
<dbReference type="PANTHER" id="PTHR19271">
    <property type="entry name" value="CYTOCHROME B"/>
    <property type="match status" value="1"/>
</dbReference>
<dbReference type="PANTHER" id="PTHR19271:SF16">
    <property type="entry name" value="CYTOCHROME B"/>
    <property type="match status" value="1"/>
</dbReference>
<dbReference type="Pfam" id="PF00032">
    <property type="entry name" value="Cytochrom_B_C"/>
    <property type="match status" value="1"/>
</dbReference>
<dbReference type="PIRSF" id="PIRSF000033">
    <property type="entry name" value="B6f_17K"/>
    <property type="match status" value="1"/>
</dbReference>
<dbReference type="SUPFAM" id="SSF81648">
    <property type="entry name" value="a domain/subunit of cytochrome bc1 complex (Ubiquinol-cytochrome c reductase)"/>
    <property type="match status" value="1"/>
</dbReference>
<dbReference type="PROSITE" id="PS51003">
    <property type="entry name" value="CYTB_CTER"/>
    <property type="match status" value="1"/>
</dbReference>
<organism>
    <name type="scientific">Amphidinium carterae</name>
    <name type="common">Dinoflagellate</name>
    <dbReference type="NCBI Taxonomy" id="2961"/>
    <lineage>
        <taxon>Eukaryota</taxon>
        <taxon>Sar</taxon>
        <taxon>Alveolata</taxon>
        <taxon>Dinophyceae</taxon>
        <taxon>Amphidiniales</taxon>
        <taxon>Amphidiniaceae</taxon>
        <taxon>Amphidinium</taxon>
    </lineage>
</organism>
<evidence type="ECO:0000250" key="1"/>
<evidence type="ECO:0000255" key="2">
    <source>
        <dbReference type="HAMAP-Rule" id="MF_01344"/>
    </source>
</evidence>
<geneLocation type="chloroplast"/>
<protein>
    <recommendedName>
        <fullName evidence="2">Cytochrome b6-f complex subunit 4</fullName>
    </recommendedName>
    <alternativeName>
        <fullName evidence="2">17 kDa polypeptide</fullName>
    </alternativeName>
</protein>
<sequence>MVVRLPYVKGSILCSALAKGCGHNYYGEPAWPNDILYIFPVVILGTISFSLGLGVIENQAIGEPANPFATPLEILPEWYFFPTFNLLRILPDKLVGVLSLASVPVILVLTAFIENINRYQNPFRRPVASLVYLTSTCYALWLGYGSVLGISEALPFV</sequence>
<keyword id="KW-0150">Chloroplast</keyword>
<keyword id="KW-0249">Electron transport</keyword>
<keyword id="KW-0472">Membrane</keyword>
<keyword id="KW-0602">Photosynthesis</keyword>
<keyword id="KW-0934">Plastid</keyword>
<keyword id="KW-0793">Thylakoid</keyword>
<keyword id="KW-0812">Transmembrane</keyword>
<keyword id="KW-1133">Transmembrane helix</keyword>
<keyword id="KW-0813">Transport</keyword>